<proteinExistence type="evidence at transcript level"/>
<gene>
    <name evidence="9" type="primary">Gabrg1</name>
</gene>
<organism>
    <name type="scientific">Rattus norvegicus</name>
    <name type="common">Rat</name>
    <dbReference type="NCBI Taxonomy" id="10116"/>
    <lineage>
        <taxon>Eukaryota</taxon>
        <taxon>Metazoa</taxon>
        <taxon>Chordata</taxon>
        <taxon>Craniata</taxon>
        <taxon>Vertebrata</taxon>
        <taxon>Euteleostomi</taxon>
        <taxon>Mammalia</taxon>
        <taxon>Eutheria</taxon>
        <taxon>Euarchontoglires</taxon>
        <taxon>Glires</taxon>
        <taxon>Rodentia</taxon>
        <taxon>Myomorpha</taxon>
        <taxon>Muroidea</taxon>
        <taxon>Muridae</taxon>
        <taxon>Murinae</taxon>
        <taxon>Rattus</taxon>
    </lineage>
</organism>
<sequence>MGSGKVFLFSPSLLWSQTRGVRLIFLLLTLHLGNCIDKADDEDDEDLTMNKTWVLAPKIHEGDITQILNSLLQGYDNKLRPDIGVRPTVIETDVYVNSIGPVDPINMEYTIDIIFAQTWFDSRLKFNSTMKVLMLNSNMVGKIWIPDTFFRNSRKSDAHWITTPNRLLRIWSDGRVLYTLRLTINAECYLQLHNFPMDEHSCPLEFSSYGYPKNEIEYKWKKPSVEVADPKYWRLYQFAFVGLRNSTEISHTISGDYIIMTIFFDLSRRMGYFTIQTYIPCILTVVLSWVSFWINKDAVPARTSLGITTVLTMTTLSTIARKSLPKVSYVTAMDLFVSVCFIFVFAALMEYGTLHYFTSNNKGKTTRDRKLKSKTSVSPGLHAGSTLIPMNNISMPQGEDDYGYQCLEGKDCATFFCCFEDCRTGSWREGRIHIRIAKIDSYSRIFFPTAFALFNLVYWVGYLYL</sequence>
<reference key="1">
    <citation type="journal article" date="1990" name="EMBO J.">
        <title>Structural and functional characterization of the gamma 1 subunit of GABAA/benzodiazepine receptors.</title>
        <authorList>
            <person name="Ymer S."/>
            <person name="Draguhn A."/>
            <person name="Wisden W."/>
            <person name="Werner P."/>
            <person name="Keinaenen K."/>
            <person name="Schofield P.R."/>
            <person name="Sprengel R."/>
            <person name="Pritchett D.B."/>
            <person name="Seeburg P.H."/>
        </authorList>
    </citation>
    <scope>NUCLEOTIDE SEQUENCE [MRNA]</scope>
    <scope>FUNCTION</scope>
    <scope>TRANSPORTER ACTIVITY</scope>
    <scope>TISSUE SPECIFICITY</scope>
    <source>
        <tissue>Brain</tissue>
    </source>
</reference>
<accession>P23574</accession>
<evidence type="ECO:0000250" key="1">
    <source>
        <dbReference type="UniProtKB" id="P08219"/>
    </source>
</evidence>
<evidence type="ECO:0000250" key="2">
    <source>
        <dbReference type="UniProtKB" id="P18507"/>
    </source>
</evidence>
<evidence type="ECO:0000250" key="3">
    <source>
        <dbReference type="UniProtKB" id="P22723"/>
    </source>
</evidence>
<evidence type="ECO:0000250" key="4">
    <source>
        <dbReference type="UniProtKB" id="P28472"/>
    </source>
</evidence>
<evidence type="ECO:0000250" key="5">
    <source>
        <dbReference type="UniProtKB" id="Q8N1C3"/>
    </source>
</evidence>
<evidence type="ECO:0000255" key="6"/>
<evidence type="ECO:0000269" key="7">
    <source>
    </source>
</evidence>
<evidence type="ECO:0000305" key="8"/>
<evidence type="ECO:0000312" key="9">
    <source>
        <dbReference type="RGD" id="621732"/>
    </source>
</evidence>
<feature type="signal peptide" evidence="6">
    <location>
        <begin position="1"/>
        <end position="20"/>
    </location>
</feature>
<feature type="chain" id="PRO_0000000475" description="Gamma-aminobutyric acid receptor subunit gamma-1">
    <location>
        <begin position="21"/>
        <end position="465"/>
    </location>
</feature>
<feature type="topological domain" description="Extracellular" evidence="8">
    <location>
        <begin position="21"/>
        <end position="273"/>
    </location>
</feature>
<feature type="transmembrane region" description="Helical" evidence="6">
    <location>
        <begin position="274"/>
        <end position="294"/>
    </location>
</feature>
<feature type="topological domain" description="Cytoplasmic" evidence="8">
    <location>
        <begin position="295"/>
        <end position="300"/>
    </location>
</feature>
<feature type="transmembrane region" description="Helical" evidence="6">
    <location>
        <begin position="301"/>
        <end position="320"/>
    </location>
</feature>
<feature type="topological domain" description="Extracellular" evidence="8">
    <location>
        <begin position="321"/>
        <end position="328"/>
    </location>
</feature>
<feature type="transmembrane region" description="Helical" evidence="6">
    <location>
        <begin position="329"/>
        <end position="349"/>
    </location>
</feature>
<feature type="topological domain" description="Cytoplasmic" evidence="8">
    <location>
        <begin position="350"/>
        <end position="444"/>
    </location>
</feature>
<feature type="transmembrane region" description="Helical" evidence="6">
    <location>
        <begin position="445"/>
        <end position="465"/>
    </location>
</feature>
<feature type="glycosylation site" description="N-linked (GlcNAc...) asparagine" evidence="6">
    <location>
        <position position="50"/>
    </location>
</feature>
<feature type="glycosylation site" description="N-linked (GlcNAc...) asparagine" evidence="6">
    <location>
        <position position="127"/>
    </location>
</feature>
<feature type="glycosylation site" description="N-linked (GlcNAc...) asparagine" evidence="6">
    <location>
        <position position="245"/>
    </location>
</feature>
<feature type="disulfide bond" evidence="4">
    <location>
        <begin position="188"/>
        <end position="202"/>
    </location>
</feature>
<protein>
    <recommendedName>
        <fullName>Gamma-aminobutyric acid receptor subunit gamma-1</fullName>
    </recommendedName>
    <alternativeName>
        <fullName>GABA(A) receptor subunit gamma-1</fullName>
        <shortName>GABAAR subunit gamma-1</shortName>
    </alternativeName>
</protein>
<comment type="function">
    <text evidence="1 2 7">Gamma subunit of the heteropentameric ligand-gated chloride channel gated by gamma-aminobutyric acid (GABA), a major inhibitory neurotransmitter in the brain (PubMed:2170110). GABA-gated chloride channels, also named GABA(A) receptors (GABAAR), consist of five subunits arranged around a central pore and contain GABA active binding site(s) located at the alpha and beta subunit interface(s) (By similarity). When activated by GABA, GABAARs selectively allow the flow of chloride anions across the cell membrane down their electrochemical gradient (PubMed:2170110). Chloride influx into the postsynaptic neuron following GABAAR opening decreases the neuron ability to generate a new action potential, thereby reducing nerve transmission (By similarity).</text>
</comment>
<comment type="catalytic activity">
    <reaction evidence="7">
        <text>chloride(in) = chloride(out)</text>
        <dbReference type="Rhea" id="RHEA:29823"/>
        <dbReference type="ChEBI" id="CHEBI:17996"/>
    </reaction>
</comment>
<comment type="subunit">
    <text evidence="5">Heteropentamer, formed by a combination of alpha (GABRA1-6), beta (GABRB1-3), gamma (GABRG1-3), delta (GABRD), epsilon (GABRE), rho (GABRR1-3), pi (GABRP) and theta (GABRQ) chains, each subunit exhibiting distinct physiological and pharmacological properties.</text>
</comment>
<comment type="subcellular location">
    <subcellularLocation>
        <location>Postsynaptic cell membrane</location>
        <topology evidence="6">Multi-pass membrane protein</topology>
    </subcellularLocation>
    <subcellularLocation>
        <location>Cell membrane</location>
        <topology evidence="6">Multi-pass membrane protein</topology>
    </subcellularLocation>
</comment>
<comment type="tissue specificity">
    <text evidence="7">Expressed in brain.</text>
</comment>
<comment type="domain">
    <text evidence="2">GABAARs subunits share a common topological structure: a peptide sequence made up of a long extracellular N-terminal, four transmembrane domains, intracellular or cytoplasmic domain located between the third and the fourth transmembrane domains.</text>
</comment>
<comment type="PTM">
    <text evidence="3">May be palmitoylated.</text>
</comment>
<comment type="similarity">
    <text evidence="8">Belongs to the ligand-gated ion channel (TC 1.A.9) family. Gamma-aminobutyric acid receptor (TC 1.A.9.5) subfamily. GABRG1 sub-subfamily.</text>
</comment>
<dbReference type="EMBL" id="X57514">
    <property type="protein sequence ID" value="CAA40739.1"/>
    <property type="molecule type" value="mRNA"/>
</dbReference>
<dbReference type="PIR" id="S12056">
    <property type="entry name" value="S12056"/>
</dbReference>
<dbReference type="RefSeq" id="NP_542153.1">
    <property type="nucleotide sequence ID" value="NM_080586.2"/>
</dbReference>
<dbReference type="SMR" id="P23574"/>
<dbReference type="BioGRID" id="250833">
    <property type="interactions" value="1"/>
</dbReference>
<dbReference type="CORUM" id="P23574"/>
<dbReference type="FunCoup" id="P23574">
    <property type="interactions" value="145"/>
</dbReference>
<dbReference type="STRING" id="10116.ENSRNOP00000003240"/>
<dbReference type="BindingDB" id="P23574"/>
<dbReference type="ChEMBL" id="CHEMBL296"/>
<dbReference type="DrugCentral" id="P23574"/>
<dbReference type="CarbonylDB" id="P23574"/>
<dbReference type="GlyCosmos" id="P23574">
    <property type="glycosylation" value="3 sites, No reported glycans"/>
</dbReference>
<dbReference type="GlyGen" id="P23574">
    <property type="glycosylation" value="3 sites"/>
</dbReference>
<dbReference type="PhosphoSitePlus" id="P23574"/>
<dbReference type="PaxDb" id="10116-ENSRNOP00000003240"/>
<dbReference type="Ensembl" id="ENSRNOT00000003240.7">
    <property type="protein sequence ID" value="ENSRNOP00000003240.4"/>
    <property type="gene ID" value="ENSRNOG00000002360.7"/>
</dbReference>
<dbReference type="GeneID" id="140674"/>
<dbReference type="KEGG" id="rno:140674"/>
<dbReference type="UCSC" id="RGD:621732">
    <property type="organism name" value="rat"/>
</dbReference>
<dbReference type="AGR" id="RGD:621732"/>
<dbReference type="CTD" id="2565"/>
<dbReference type="RGD" id="621732">
    <property type="gene designation" value="Gabrg1"/>
</dbReference>
<dbReference type="eggNOG" id="KOG3642">
    <property type="taxonomic scope" value="Eukaryota"/>
</dbReference>
<dbReference type="GeneTree" id="ENSGT00940000160193"/>
<dbReference type="HOGENOM" id="CLU_010920_2_0_1"/>
<dbReference type="InParanoid" id="P23574"/>
<dbReference type="OMA" id="MGSWEAF"/>
<dbReference type="OrthoDB" id="203862at2759"/>
<dbReference type="PhylomeDB" id="P23574"/>
<dbReference type="TreeFam" id="TF315453"/>
<dbReference type="PRO" id="PR:P23574"/>
<dbReference type="Proteomes" id="UP000002494">
    <property type="component" value="Chromosome 14"/>
</dbReference>
<dbReference type="Bgee" id="ENSRNOG00000002360">
    <property type="expression patterns" value="Expressed in frontal cortex and 3 other cell types or tissues"/>
</dbReference>
<dbReference type="GO" id="GO:0034707">
    <property type="term" value="C:chloride channel complex"/>
    <property type="evidence" value="ECO:0007669"/>
    <property type="project" value="UniProtKB-KW"/>
</dbReference>
<dbReference type="GO" id="GO:0032590">
    <property type="term" value="C:dendrite membrane"/>
    <property type="evidence" value="ECO:0000318"/>
    <property type="project" value="GO_Central"/>
</dbReference>
<dbReference type="GO" id="GO:1902711">
    <property type="term" value="C:GABA-A receptor complex"/>
    <property type="evidence" value="ECO:0000318"/>
    <property type="project" value="GO_Central"/>
</dbReference>
<dbReference type="GO" id="GO:0098794">
    <property type="term" value="C:postsynapse"/>
    <property type="evidence" value="ECO:0000318"/>
    <property type="project" value="GO_Central"/>
</dbReference>
<dbReference type="GO" id="GO:0045211">
    <property type="term" value="C:postsynaptic membrane"/>
    <property type="evidence" value="ECO:0007669"/>
    <property type="project" value="UniProtKB-SubCell"/>
</dbReference>
<dbReference type="GO" id="GO:0043235">
    <property type="term" value="C:receptor complex"/>
    <property type="evidence" value="ECO:0000314"/>
    <property type="project" value="RGD"/>
</dbReference>
<dbReference type="GO" id="GO:0050811">
    <property type="term" value="F:GABA receptor binding"/>
    <property type="evidence" value="ECO:0000353"/>
    <property type="project" value="RGD"/>
</dbReference>
<dbReference type="GO" id="GO:0004890">
    <property type="term" value="F:GABA-A receptor activity"/>
    <property type="evidence" value="ECO:0000314"/>
    <property type="project" value="RGD"/>
</dbReference>
<dbReference type="GO" id="GO:0022851">
    <property type="term" value="F:GABA-gated chloride ion channel activity"/>
    <property type="evidence" value="ECO:0000318"/>
    <property type="project" value="GO_Central"/>
</dbReference>
<dbReference type="GO" id="GO:0007268">
    <property type="term" value="P:chemical synaptic transmission"/>
    <property type="evidence" value="ECO:0000266"/>
    <property type="project" value="RGD"/>
</dbReference>
<dbReference type="GO" id="GO:1902476">
    <property type="term" value="P:chloride transmembrane transport"/>
    <property type="evidence" value="ECO:0000318"/>
    <property type="project" value="GO_Central"/>
</dbReference>
<dbReference type="GO" id="GO:0007214">
    <property type="term" value="P:gamma-aminobutyric acid signaling pathway"/>
    <property type="evidence" value="ECO:0000318"/>
    <property type="project" value="GO_Central"/>
</dbReference>
<dbReference type="GO" id="GO:1904862">
    <property type="term" value="P:inhibitory synapse assembly"/>
    <property type="evidence" value="ECO:0000318"/>
    <property type="project" value="GO_Central"/>
</dbReference>
<dbReference type="GO" id="GO:0051932">
    <property type="term" value="P:synaptic transmission, GABAergic"/>
    <property type="evidence" value="ECO:0000318"/>
    <property type="project" value="GO_Central"/>
</dbReference>
<dbReference type="CDD" id="cd19000">
    <property type="entry name" value="LGIC_ECD_GABAAR_G"/>
    <property type="match status" value="1"/>
</dbReference>
<dbReference type="CDD" id="cd19054">
    <property type="entry name" value="LGIC_TM_GABAAR_gamma"/>
    <property type="match status" value="1"/>
</dbReference>
<dbReference type="FunFam" id="2.70.170.10:FF:000003">
    <property type="entry name" value="Putative gamma-aminobutyric acid receptor subunit gamma-2"/>
    <property type="match status" value="1"/>
</dbReference>
<dbReference type="Gene3D" id="2.70.170.10">
    <property type="entry name" value="Neurotransmitter-gated ion-channel ligand-binding domain"/>
    <property type="match status" value="1"/>
</dbReference>
<dbReference type="Gene3D" id="1.20.58.390">
    <property type="entry name" value="Neurotransmitter-gated ion-channel transmembrane domain"/>
    <property type="match status" value="1"/>
</dbReference>
<dbReference type="InterPro" id="IPR006028">
    <property type="entry name" value="GABAA/Glycine_rcpt"/>
</dbReference>
<dbReference type="InterPro" id="IPR005438">
    <property type="entry name" value="GABBAg1_rcpt"/>
</dbReference>
<dbReference type="InterPro" id="IPR005437">
    <property type="entry name" value="GABRG-1/4"/>
</dbReference>
<dbReference type="InterPro" id="IPR006202">
    <property type="entry name" value="Neur_chan_lig-bd"/>
</dbReference>
<dbReference type="InterPro" id="IPR036734">
    <property type="entry name" value="Neur_chan_lig-bd_sf"/>
</dbReference>
<dbReference type="InterPro" id="IPR006201">
    <property type="entry name" value="Neur_channel"/>
</dbReference>
<dbReference type="InterPro" id="IPR036719">
    <property type="entry name" value="Neuro-gated_channel_TM_sf"/>
</dbReference>
<dbReference type="InterPro" id="IPR038050">
    <property type="entry name" value="Neuro_actylchol_rec"/>
</dbReference>
<dbReference type="InterPro" id="IPR006029">
    <property type="entry name" value="Neurotrans-gated_channel_TM"/>
</dbReference>
<dbReference type="InterPro" id="IPR018000">
    <property type="entry name" value="Neurotransmitter_ion_chnl_CS"/>
</dbReference>
<dbReference type="NCBIfam" id="TIGR00860">
    <property type="entry name" value="LIC"/>
    <property type="match status" value="1"/>
</dbReference>
<dbReference type="PANTHER" id="PTHR18945">
    <property type="entry name" value="NEUROTRANSMITTER GATED ION CHANNEL"/>
    <property type="match status" value="1"/>
</dbReference>
<dbReference type="Pfam" id="PF02931">
    <property type="entry name" value="Neur_chan_LBD"/>
    <property type="match status" value="1"/>
</dbReference>
<dbReference type="Pfam" id="PF02932">
    <property type="entry name" value="Neur_chan_memb"/>
    <property type="match status" value="2"/>
</dbReference>
<dbReference type="PRINTS" id="PR00253">
    <property type="entry name" value="GABAARECEPTR"/>
</dbReference>
<dbReference type="PRINTS" id="PR01620">
    <property type="entry name" value="GABAARGAMMA"/>
</dbReference>
<dbReference type="PRINTS" id="PR01621">
    <property type="entry name" value="GABAARGAMMA1"/>
</dbReference>
<dbReference type="PRINTS" id="PR00252">
    <property type="entry name" value="NRIONCHANNEL"/>
</dbReference>
<dbReference type="SUPFAM" id="SSF90112">
    <property type="entry name" value="Neurotransmitter-gated ion-channel transmembrane pore"/>
    <property type="match status" value="1"/>
</dbReference>
<dbReference type="SUPFAM" id="SSF63712">
    <property type="entry name" value="Nicotinic receptor ligand binding domain-like"/>
    <property type="match status" value="1"/>
</dbReference>
<dbReference type="PROSITE" id="PS00236">
    <property type="entry name" value="NEUROTR_ION_CHANNEL"/>
    <property type="match status" value="1"/>
</dbReference>
<keyword id="KW-1003">Cell membrane</keyword>
<keyword id="KW-0868">Chloride</keyword>
<keyword id="KW-0869">Chloride channel</keyword>
<keyword id="KW-1015">Disulfide bond</keyword>
<keyword id="KW-0325">Glycoprotein</keyword>
<keyword id="KW-0407">Ion channel</keyword>
<keyword id="KW-0406">Ion transport</keyword>
<keyword id="KW-0449">Lipoprotein</keyword>
<keyword id="KW-0472">Membrane</keyword>
<keyword id="KW-0564">Palmitate</keyword>
<keyword id="KW-0628">Postsynaptic cell membrane</keyword>
<keyword id="KW-1185">Reference proteome</keyword>
<keyword id="KW-0732">Signal</keyword>
<keyword id="KW-0770">Synapse</keyword>
<keyword id="KW-0812">Transmembrane</keyword>
<keyword id="KW-1133">Transmembrane helix</keyword>
<keyword id="KW-0813">Transport</keyword>
<name>GBRG1_RAT</name>